<organism>
    <name type="scientific">Escherichia coli O139:H28 (strain E24377A / ETEC)</name>
    <dbReference type="NCBI Taxonomy" id="331111"/>
    <lineage>
        <taxon>Bacteria</taxon>
        <taxon>Pseudomonadati</taxon>
        <taxon>Pseudomonadota</taxon>
        <taxon>Gammaproteobacteria</taxon>
        <taxon>Enterobacterales</taxon>
        <taxon>Enterobacteriaceae</taxon>
        <taxon>Escherichia</taxon>
    </lineage>
</organism>
<evidence type="ECO:0000255" key="1">
    <source>
        <dbReference type="HAMAP-Rule" id="MF_00002"/>
    </source>
</evidence>
<sequence>MTHDNKLQVEAIKRGTVIDHIPAQIGFKLLSLFKLTETDQRITIGLNLPSGEMGRKDLIKIENTFLSEDQVDQLALYAPQATVNRIDNYEVVGKSRPSLPERIDNVLVCPNSNCISHAEPVSSSFAVRKRANDIALKCKYCEKEFSHNVVLAN</sequence>
<comment type="function">
    <text evidence="1">Involved in allosteric regulation of aspartate carbamoyltransferase.</text>
</comment>
<comment type="cofactor">
    <cofactor evidence="1">
        <name>Zn(2+)</name>
        <dbReference type="ChEBI" id="CHEBI:29105"/>
    </cofactor>
    <text evidence="1">Binds 1 zinc ion per subunit.</text>
</comment>
<comment type="subunit">
    <text evidence="1">Contains catalytic and regulatory chains.</text>
</comment>
<comment type="similarity">
    <text evidence="1">Belongs to the PyrI family.</text>
</comment>
<proteinExistence type="inferred from homology"/>
<gene>
    <name evidence="1" type="primary">pyrI</name>
    <name type="ordered locus">EcE24377A_4817</name>
</gene>
<feature type="chain" id="PRO_1000057014" description="Aspartate carbamoyltransferase regulatory chain">
    <location>
        <begin position="1"/>
        <end position="153"/>
    </location>
</feature>
<feature type="binding site" evidence="1">
    <location>
        <position position="109"/>
    </location>
    <ligand>
        <name>Zn(2+)</name>
        <dbReference type="ChEBI" id="CHEBI:29105"/>
    </ligand>
</feature>
<feature type="binding site" evidence="1">
    <location>
        <position position="114"/>
    </location>
    <ligand>
        <name>Zn(2+)</name>
        <dbReference type="ChEBI" id="CHEBI:29105"/>
    </ligand>
</feature>
<feature type="binding site" evidence="1">
    <location>
        <position position="138"/>
    </location>
    <ligand>
        <name>Zn(2+)</name>
        <dbReference type="ChEBI" id="CHEBI:29105"/>
    </ligand>
</feature>
<feature type="binding site" evidence="1">
    <location>
        <position position="141"/>
    </location>
    <ligand>
        <name>Zn(2+)</name>
        <dbReference type="ChEBI" id="CHEBI:29105"/>
    </ligand>
</feature>
<accession>A7ZVC6</accession>
<protein>
    <recommendedName>
        <fullName evidence="1">Aspartate carbamoyltransferase regulatory chain</fullName>
    </recommendedName>
</protein>
<keyword id="KW-0479">Metal-binding</keyword>
<keyword id="KW-0665">Pyrimidine biosynthesis</keyword>
<keyword id="KW-1185">Reference proteome</keyword>
<keyword id="KW-0862">Zinc</keyword>
<dbReference type="EMBL" id="CP000800">
    <property type="protein sequence ID" value="ABV18942.1"/>
    <property type="molecule type" value="Genomic_DNA"/>
</dbReference>
<dbReference type="RefSeq" id="WP_000148581.1">
    <property type="nucleotide sequence ID" value="NC_009801.1"/>
</dbReference>
<dbReference type="SMR" id="A7ZVC6"/>
<dbReference type="GeneID" id="93777580"/>
<dbReference type="KEGG" id="ecw:EcE24377A_4817"/>
<dbReference type="HOGENOM" id="CLU_128576_0_0_6"/>
<dbReference type="Proteomes" id="UP000001122">
    <property type="component" value="Chromosome"/>
</dbReference>
<dbReference type="GO" id="GO:0009347">
    <property type="term" value="C:aspartate carbamoyltransferase complex"/>
    <property type="evidence" value="ECO:0007669"/>
    <property type="project" value="InterPro"/>
</dbReference>
<dbReference type="GO" id="GO:0046872">
    <property type="term" value="F:metal ion binding"/>
    <property type="evidence" value="ECO:0007669"/>
    <property type="project" value="UniProtKB-KW"/>
</dbReference>
<dbReference type="GO" id="GO:0006207">
    <property type="term" value="P:'de novo' pyrimidine nucleobase biosynthetic process"/>
    <property type="evidence" value="ECO:0007669"/>
    <property type="project" value="InterPro"/>
</dbReference>
<dbReference type="GO" id="GO:0006221">
    <property type="term" value="P:pyrimidine nucleotide biosynthetic process"/>
    <property type="evidence" value="ECO:0007669"/>
    <property type="project" value="UniProtKB-UniRule"/>
</dbReference>
<dbReference type="FunFam" id="2.30.30.20:FF:000001">
    <property type="entry name" value="Aspartate carbamoyltransferase regulatory chain"/>
    <property type="match status" value="1"/>
</dbReference>
<dbReference type="FunFam" id="3.30.70.140:FF:000001">
    <property type="entry name" value="Aspartate carbamoyltransferase regulatory chain"/>
    <property type="match status" value="1"/>
</dbReference>
<dbReference type="Gene3D" id="2.30.30.20">
    <property type="entry name" value="Aspartate carbamoyltransferase regulatory subunit, C-terminal domain"/>
    <property type="match status" value="1"/>
</dbReference>
<dbReference type="Gene3D" id="3.30.70.140">
    <property type="entry name" value="Aspartate carbamoyltransferase regulatory subunit, N-terminal domain"/>
    <property type="match status" value="1"/>
</dbReference>
<dbReference type="HAMAP" id="MF_00002">
    <property type="entry name" value="Asp_carb_tr_reg"/>
    <property type="match status" value="1"/>
</dbReference>
<dbReference type="InterPro" id="IPR020545">
    <property type="entry name" value="Asp_carbamoyltransf_reg_N"/>
</dbReference>
<dbReference type="InterPro" id="IPR002801">
    <property type="entry name" value="Asp_carbamoylTrfase_reg"/>
</dbReference>
<dbReference type="InterPro" id="IPR020542">
    <property type="entry name" value="Asp_carbamoyltrfase_reg_C"/>
</dbReference>
<dbReference type="InterPro" id="IPR036792">
    <property type="entry name" value="Asp_carbatrfase_reg_C_sf"/>
</dbReference>
<dbReference type="InterPro" id="IPR036793">
    <property type="entry name" value="Asp_carbatrfase_reg_N_sf"/>
</dbReference>
<dbReference type="NCBIfam" id="TIGR00240">
    <property type="entry name" value="ATCase_reg"/>
    <property type="match status" value="1"/>
</dbReference>
<dbReference type="PANTHER" id="PTHR35805">
    <property type="entry name" value="ASPARTATE CARBAMOYLTRANSFERASE REGULATORY CHAIN"/>
    <property type="match status" value="1"/>
</dbReference>
<dbReference type="PANTHER" id="PTHR35805:SF1">
    <property type="entry name" value="ASPARTATE CARBAMOYLTRANSFERASE REGULATORY CHAIN"/>
    <property type="match status" value="1"/>
</dbReference>
<dbReference type="Pfam" id="PF01948">
    <property type="entry name" value="PyrI"/>
    <property type="match status" value="1"/>
</dbReference>
<dbReference type="Pfam" id="PF02748">
    <property type="entry name" value="PyrI_C"/>
    <property type="match status" value="1"/>
</dbReference>
<dbReference type="SUPFAM" id="SSF57825">
    <property type="entry name" value="Aspartate carbamoyltransferase, Regulatory-chain, C-terminal domain"/>
    <property type="match status" value="1"/>
</dbReference>
<dbReference type="SUPFAM" id="SSF54893">
    <property type="entry name" value="Aspartate carbamoyltransferase, Regulatory-chain, N-terminal domain"/>
    <property type="match status" value="1"/>
</dbReference>
<reference key="1">
    <citation type="journal article" date="2008" name="J. Bacteriol.">
        <title>The pangenome structure of Escherichia coli: comparative genomic analysis of E. coli commensal and pathogenic isolates.</title>
        <authorList>
            <person name="Rasko D.A."/>
            <person name="Rosovitz M.J."/>
            <person name="Myers G.S.A."/>
            <person name="Mongodin E.F."/>
            <person name="Fricke W.F."/>
            <person name="Gajer P."/>
            <person name="Crabtree J."/>
            <person name="Sebaihia M."/>
            <person name="Thomson N.R."/>
            <person name="Chaudhuri R."/>
            <person name="Henderson I.R."/>
            <person name="Sperandio V."/>
            <person name="Ravel J."/>
        </authorList>
    </citation>
    <scope>NUCLEOTIDE SEQUENCE [LARGE SCALE GENOMIC DNA]</scope>
    <source>
        <strain>E24377A / ETEC</strain>
    </source>
</reference>
<name>PYRI_ECO24</name>